<feature type="chain" id="PRO_0000399483" description="RNA silencing suppressor p14">
    <location>
        <begin position="1"/>
        <end position="130"/>
    </location>
</feature>
<reference key="1">
    <citation type="journal article" date="2001" name="Plant Dis.">
        <title>Characterization of a virus from pigeonpea with affinities to species in the genus Aureusvirus, family Tombusviridae.</title>
        <authorList>
            <person name="Lava Kumar P."/>
            <person name="Jones A.T."/>
            <person name="Sreenivasulu P."/>
            <person name="Fenton B."/>
            <person name="Reddy D.V.R."/>
        </authorList>
        <dbReference type="AGRICOLA" id="IND23224278"/>
    </citation>
    <scope>NUCLEOTIDE SEQUENCE [GENOMIC RNA]</scope>
</reference>
<reference key="2">
    <citation type="journal article" date="2005" name="J. Virol.">
        <title>Aureusvirus P14 is an efficient RNA silencing suppressor that binds double-stranded RNAs without size specificity.</title>
        <authorList>
            <person name="Merai Z."/>
            <person name="Kerenyi Z."/>
            <person name="Molnar A."/>
            <person name="Barta E."/>
            <person name="Valoczi A."/>
            <person name="Bisztray G."/>
            <person name="Havelda Z."/>
            <person name="Burgyan J."/>
            <person name="Silhavy D."/>
        </authorList>
    </citation>
    <scope>FUNCTION</scope>
</reference>
<keyword id="KW-0945">Host-virus interaction</keyword>
<keyword id="KW-1090">Inhibition of host innate immune response by virus</keyword>
<keyword id="KW-1185">Reference proteome</keyword>
<keyword id="KW-0694">RNA-binding</keyword>
<keyword id="KW-0941">Suppressor of RNA silencing</keyword>
<keyword id="KW-0899">Viral immunoevasion</keyword>
<sequence length="130" mass="14183">MENSQTGVLCPNRCQVCSHTTYIRESSGQGGRQACRFTRFVTQPRVVSEQGIQYRSWLSDRGFPATLLSTSGGLSTTIRGHGVAVTIQGDSKSLLNFCRVAYDVFHHPVVQSEVCHGSGPATSDEITTKF</sequence>
<accession>Q9QBU1</accession>
<organism>
    <name type="scientific">Pothos latent virus (isolate Pigeonpea/India)</name>
    <name type="common">PoLV</name>
    <dbReference type="NCBI Taxonomy" id="652109"/>
    <lineage>
        <taxon>Viruses</taxon>
        <taxon>Riboviria</taxon>
        <taxon>Orthornavirae</taxon>
        <taxon>Kitrinoviricota</taxon>
        <taxon>Tolucaviricetes</taxon>
        <taxon>Tolivirales</taxon>
        <taxon>Tombusviridae</taxon>
        <taxon>Procedovirinae</taxon>
        <taxon>Aureusvirus</taxon>
        <taxon>Aureusvirus aurei</taxon>
    </lineage>
</organism>
<comment type="function">
    <text evidence="1">Acts as a suppressor of RNA-mediated gene silencing, also known as post-transcriptional gene silencing (PTGS), a mechanism of plant viral defense that limits the accumulation of viral RNAs. Binds to dsRNAs without size specificity.</text>
</comment>
<name>P14_POLVP</name>
<evidence type="ECO:0000269" key="1">
    <source>
    </source>
</evidence>
<dbReference type="EMBL" id="AJ243370">
    <property type="protein sequence ID" value="CAB59796.1"/>
    <property type="molecule type" value="Genomic_RNA"/>
</dbReference>
<dbReference type="Proteomes" id="UP000000572">
    <property type="component" value="Genome"/>
</dbReference>
<dbReference type="GO" id="GO:0003723">
    <property type="term" value="F:RNA binding"/>
    <property type="evidence" value="ECO:0007669"/>
    <property type="project" value="UniProtKB-KW"/>
</dbReference>
<dbReference type="GO" id="GO:0052170">
    <property type="term" value="P:symbiont-mediated suppression of host innate immune response"/>
    <property type="evidence" value="ECO:0007669"/>
    <property type="project" value="UniProtKB-KW"/>
</dbReference>
<organismHost>
    <name type="scientific">Cajanus cajan</name>
    <name type="common">Pigeon pea</name>
    <name type="synonym">Cajanus indicus</name>
    <dbReference type="NCBI Taxonomy" id="3821"/>
</organismHost>
<organismHost>
    <name type="scientific">Pothos</name>
    <dbReference type="NCBI Taxonomy" id="174212"/>
</organismHost>
<gene>
    <name type="ORF">ORF4</name>
</gene>
<proteinExistence type="predicted"/>
<protein>
    <recommendedName>
        <fullName>RNA silencing suppressor p14</fullName>
    </recommendedName>
</protein>